<organism>
    <name type="scientific">Caenorhabditis elegans</name>
    <dbReference type="NCBI Taxonomy" id="6239"/>
    <lineage>
        <taxon>Eukaryota</taxon>
        <taxon>Metazoa</taxon>
        <taxon>Ecdysozoa</taxon>
        <taxon>Nematoda</taxon>
        <taxon>Chromadorea</taxon>
        <taxon>Rhabditida</taxon>
        <taxon>Rhabditina</taxon>
        <taxon>Rhabditomorpha</taxon>
        <taxon>Rhabditoidea</taxon>
        <taxon>Rhabditidae</taxon>
        <taxon>Peloderinae</taxon>
        <taxon>Caenorhabditis</taxon>
    </lineage>
</organism>
<feature type="chain" id="PRO_0000331548" description="Organic solute transporter alpha-like protein 2">
    <location>
        <begin position="1"/>
        <end position="342"/>
    </location>
</feature>
<feature type="topological domain" description="Extracellular" evidence="2">
    <location>
        <begin position="1"/>
        <end position="50"/>
    </location>
</feature>
<feature type="transmembrane region" description="Helical" evidence="2">
    <location>
        <begin position="51"/>
        <end position="71"/>
    </location>
</feature>
<feature type="topological domain" description="Cytoplasmic" evidence="2">
    <location>
        <begin position="72"/>
        <end position="79"/>
    </location>
</feature>
<feature type="transmembrane region" description="Helical" evidence="2">
    <location>
        <begin position="80"/>
        <end position="100"/>
    </location>
</feature>
<feature type="topological domain" description="Extracellular" evidence="2">
    <location>
        <begin position="101"/>
        <end position="109"/>
    </location>
</feature>
<feature type="transmembrane region" description="Helical" evidence="2">
    <location>
        <begin position="110"/>
        <end position="130"/>
    </location>
</feature>
<feature type="topological domain" description="Cytoplasmic" evidence="2">
    <location>
        <begin position="131"/>
        <end position="176"/>
    </location>
</feature>
<feature type="transmembrane region" description="Helical" evidence="2">
    <location>
        <begin position="177"/>
        <end position="197"/>
    </location>
</feature>
<feature type="topological domain" description="Extracellular" evidence="2">
    <location>
        <begin position="198"/>
        <end position="208"/>
    </location>
</feature>
<feature type="transmembrane region" description="Helical" evidence="2">
    <location>
        <begin position="209"/>
        <end position="229"/>
    </location>
</feature>
<feature type="topological domain" description="Cytoplasmic" evidence="2">
    <location>
        <begin position="230"/>
        <end position="243"/>
    </location>
</feature>
<feature type="transmembrane region" description="Helical" evidence="2">
    <location>
        <begin position="244"/>
        <end position="264"/>
    </location>
</feature>
<feature type="topological domain" description="Extracellular" evidence="2">
    <location>
        <begin position="265"/>
        <end position="290"/>
    </location>
</feature>
<feature type="transmembrane region" description="Helical" evidence="2">
    <location>
        <begin position="291"/>
        <end position="311"/>
    </location>
</feature>
<feature type="topological domain" description="Cytoplasmic" evidence="2">
    <location>
        <begin position="312"/>
        <end position="342"/>
    </location>
</feature>
<feature type="glycosylation site" description="N-linked (GlcNAc...) asparagine" evidence="2">
    <location>
        <position position="20"/>
    </location>
</feature>
<feature type="splice variant" id="VSP_033257" description="In isoform c." evidence="3">
    <location>
        <begin position="206"/>
        <end position="342"/>
    </location>
</feature>
<feature type="splice variant" id="VSP_033258" description="In isoform b." evidence="3">
    <original>YWKNFFTVIEAFCVTLISTVLLQPSKSSFFDKHPSCRSMSSARSTITDVDTDESTT</original>
    <variation>CEFELNITQMRSFCDFCARSRRENFLLNARRCSPLKSTVIPNFRCCGIFIDFS</variation>
    <location>
        <begin position="287"/>
        <end position="342"/>
    </location>
</feature>
<dbReference type="EMBL" id="FO080599">
    <property type="protein sequence ID" value="CCD65012.1"/>
    <property type="molecule type" value="Genomic_DNA"/>
</dbReference>
<dbReference type="EMBL" id="FO080599">
    <property type="protein sequence ID" value="CCD65013.1"/>
    <property type="molecule type" value="Genomic_DNA"/>
</dbReference>
<dbReference type="EMBL" id="FO080599">
    <property type="protein sequence ID" value="CCD65014.1"/>
    <property type="molecule type" value="Genomic_DNA"/>
</dbReference>
<dbReference type="PIR" id="T15541">
    <property type="entry name" value="T15541"/>
</dbReference>
<dbReference type="RefSeq" id="NP_741003.1">
    <molecule id="Q18071-1"/>
    <property type="nucleotide sequence ID" value="NM_171004.7"/>
</dbReference>
<dbReference type="FunCoup" id="Q18071">
    <property type="interactions" value="68"/>
</dbReference>
<dbReference type="STRING" id="6239.C18A3.4a.1"/>
<dbReference type="TCDB" id="2.A.82.1.4">
    <property type="family name" value="the organic solute transporter (ost) family"/>
</dbReference>
<dbReference type="GlyCosmos" id="Q18071">
    <property type="glycosylation" value="1 site, No reported glycans"/>
</dbReference>
<dbReference type="PaxDb" id="6239-C18A3.4a.1"/>
<dbReference type="EnsemblMetazoa" id="C18A3.4a.1">
    <molecule id="Q18071-1"/>
    <property type="protein sequence ID" value="C18A3.4a.1"/>
    <property type="gene ID" value="WBGene00015942"/>
</dbReference>
<dbReference type="EnsemblMetazoa" id="C18A3.4a.2">
    <molecule id="Q18071-1"/>
    <property type="protein sequence ID" value="C18A3.4a.2"/>
    <property type="gene ID" value="WBGene00015942"/>
</dbReference>
<dbReference type="GeneID" id="173966"/>
<dbReference type="KEGG" id="cel:CELE_C18A3.4"/>
<dbReference type="UCSC" id="C18A3.4a">
    <molecule id="Q18071-1"/>
    <property type="organism name" value="c. elegans"/>
</dbReference>
<dbReference type="AGR" id="WB:WBGene00015942"/>
<dbReference type="CTD" id="173966"/>
<dbReference type="WormBase" id="C18A3.4a">
    <molecule id="Q18071-1"/>
    <property type="protein sequence ID" value="CE01796"/>
    <property type="gene ID" value="WBGene00015942"/>
    <property type="gene designation" value="osta-2"/>
</dbReference>
<dbReference type="eggNOG" id="KOG2641">
    <property type="taxonomic scope" value="Eukaryota"/>
</dbReference>
<dbReference type="HOGENOM" id="CLU_061874_0_0_1"/>
<dbReference type="InParanoid" id="Q18071"/>
<dbReference type="OMA" id="CLPMVIP"/>
<dbReference type="OrthoDB" id="5832279at2759"/>
<dbReference type="PhylomeDB" id="Q18071"/>
<dbReference type="PRO" id="PR:Q18071"/>
<dbReference type="Proteomes" id="UP000001940">
    <property type="component" value="Chromosome II"/>
</dbReference>
<dbReference type="Bgee" id="WBGene00015942">
    <property type="expression patterns" value="Expressed in pharyngeal muscle cell (C elegans) and 3 other cell types or tissues"/>
</dbReference>
<dbReference type="GO" id="GO:0016020">
    <property type="term" value="C:membrane"/>
    <property type="evidence" value="ECO:0000250"/>
    <property type="project" value="UniProtKB"/>
</dbReference>
<dbReference type="GO" id="GO:0005886">
    <property type="term" value="C:plasma membrane"/>
    <property type="evidence" value="ECO:0007669"/>
    <property type="project" value="UniProtKB-SubCell"/>
</dbReference>
<dbReference type="GO" id="GO:0022857">
    <property type="term" value="F:transmembrane transporter activity"/>
    <property type="evidence" value="ECO:0000318"/>
    <property type="project" value="GO_Central"/>
</dbReference>
<dbReference type="InterPro" id="IPR005178">
    <property type="entry name" value="Ostalpha/TMEM184C"/>
</dbReference>
<dbReference type="PANTHER" id="PTHR23423">
    <property type="entry name" value="ORGANIC SOLUTE TRANSPORTER-RELATED"/>
    <property type="match status" value="1"/>
</dbReference>
<dbReference type="Pfam" id="PF03619">
    <property type="entry name" value="Solute_trans_a"/>
    <property type="match status" value="1"/>
</dbReference>
<dbReference type="SMART" id="SM01417">
    <property type="entry name" value="Solute_trans_a"/>
    <property type="match status" value="1"/>
</dbReference>
<protein>
    <recommendedName>
        <fullName>Organic solute transporter alpha-like protein 2</fullName>
    </recommendedName>
    <alternativeName>
        <fullName>Solute carrier family 51 subunit alpha homolog A</fullName>
    </alternativeName>
</protein>
<accession>Q18071</accession>
<accession>Q8IG51</accession>
<accession>Q95QV9</accession>
<evidence type="ECO:0000250" key="1"/>
<evidence type="ECO:0000255" key="2"/>
<evidence type="ECO:0000305" key="3"/>
<reference key="1">
    <citation type="journal article" date="1998" name="Science">
        <title>Genome sequence of the nematode C. elegans: a platform for investigating biology.</title>
        <authorList>
            <consortium name="The C. elegans sequencing consortium"/>
        </authorList>
    </citation>
    <scope>NUCLEOTIDE SEQUENCE [LARGE SCALE GENOMIC DNA]</scope>
    <scope>ALTERNATIVE SPLICING</scope>
    <source>
        <strain>Bristol N2</strain>
    </source>
</reference>
<comment type="function">
    <text evidence="1">Probable transporter.</text>
</comment>
<comment type="subcellular location">
    <subcellularLocation>
        <location evidence="1">Cell membrane</location>
        <topology evidence="1">Multi-pass membrane protein</topology>
    </subcellularLocation>
</comment>
<comment type="alternative products">
    <event type="alternative splicing"/>
    <isoform>
        <id>Q18071-1</id>
        <name>a</name>
        <sequence type="displayed"/>
    </isoform>
    <isoform>
        <id>Q18071-2</id>
        <name>b</name>
        <sequence type="described" ref="VSP_033258"/>
    </isoform>
    <isoform>
        <id>Q18071-3</id>
        <name>c</name>
        <sequence type="described" ref="VSP_033257"/>
    </isoform>
</comment>
<comment type="similarity">
    <text evidence="3">Belongs to the OST-alpha family.</text>
</comment>
<gene>
    <name type="primary">osta-2</name>
    <name type="ORF">C18A3.4</name>
</gene>
<keyword id="KW-0025">Alternative splicing</keyword>
<keyword id="KW-1003">Cell membrane</keyword>
<keyword id="KW-0325">Glycoprotein</keyword>
<keyword id="KW-0472">Membrane</keyword>
<keyword id="KW-1185">Reference proteome</keyword>
<keyword id="KW-0812">Transmembrane</keyword>
<keyword id="KW-1133">Transmembrane helix</keyword>
<keyword id="KW-0813">Transport</keyword>
<proteinExistence type="inferred from homology"/>
<sequence>MLEISPWETLVKLLTDSLLNCTGTHEDVPHAKTFLRSLTTTYIASLAVATAVTVGTVCLAVLHLIYIHFYITHSSRRLHIVLLACTAPLVSLLALVAMYMPRVWFLSHLLSFLYFSFALWVIICLLLHIFDGHHALVTKMMQRLQYVEIATPPFCCLFPCLPKVRLEGKKIRWCELMVMQAPIVRLFATLVSLVIYFEYQDQGLVPLKVLDFITLPSLLAGIYGTHILVTTVSRMDELISYRYVVVFRLLDFFFMVFGLQQPVFDFLARYGAFGCGTVLPAIETSFYWKNFFTVIEAFCVTLISTVLLQPSKSSFFDKHPSCRSMSSARSTITDVDTDESTT</sequence>
<name>OSTA2_CAEEL</name>